<organism>
    <name type="scientific">Saccharomyces cerevisiae (strain ATCC 204508 / S288c)</name>
    <name type="common">Baker's yeast</name>
    <dbReference type="NCBI Taxonomy" id="559292"/>
    <lineage>
        <taxon>Eukaryota</taxon>
        <taxon>Fungi</taxon>
        <taxon>Dikarya</taxon>
        <taxon>Ascomycota</taxon>
        <taxon>Saccharomycotina</taxon>
        <taxon>Saccharomycetes</taxon>
        <taxon>Saccharomycetales</taxon>
        <taxon>Saccharomycetaceae</taxon>
        <taxon>Saccharomyces</taxon>
    </lineage>
</organism>
<evidence type="ECO:0000250" key="1">
    <source>
        <dbReference type="UniProtKB" id="Q15119"/>
    </source>
</evidence>
<evidence type="ECO:0000255" key="2"/>
<evidence type="ECO:0000255" key="3">
    <source>
        <dbReference type="PROSITE-ProRule" id="PRU00107"/>
    </source>
</evidence>
<evidence type="ECO:0000269" key="4">
    <source>
    </source>
</evidence>
<evidence type="ECO:0000269" key="5">
    <source>
    </source>
</evidence>
<evidence type="ECO:0000269" key="6">
    <source>
    </source>
</evidence>
<evidence type="ECO:0000269" key="7">
    <source>
    </source>
</evidence>
<evidence type="ECO:0000269" key="8">
    <source>
    </source>
</evidence>
<evidence type="ECO:0000269" key="9">
    <source>
    </source>
</evidence>
<evidence type="ECO:0000303" key="10">
    <source>
    </source>
</evidence>
<evidence type="ECO:0000303" key="11">
    <source>
    </source>
</evidence>
<evidence type="ECO:0000305" key="12"/>
<evidence type="ECO:0000305" key="13">
    <source>
    </source>
</evidence>
<evidence type="ECO:0000305" key="14">
    <source>
    </source>
</evidence>
<accession>P40530</accession>
<accession>D6VVP0</accession>
<comment type="function">
    <text evidence="6 7 9">Inhibits the mitochondrial pyruvate dehydrogenase complex by phosphorylation of the E1 alpha subunit (PDA1), thus contributing to the regulation of glucose metabolism. Also involved in telomere maintenance.</text>
</comment>
<comment type="catalytic activity">
    <reaction evidence="13 14">
        <text>L-seryl-[pyruvate dehydrogenase E1 alpha subunit] + ATP = O-phospho-L-seryl-[pyruvate dehydrogenase E1 alpha subunit] + ADP + H(+)</text>
        <dbReference type="Rhea" id="RHEA:23052"/>
        <dbReference type="Rhea" id="RHEA-COMP:13689"/>
        <dbReference type="Rhea" id="RHEA-COMP:13690"/>
        <dbReference type="ChEBI" id="CHEBI:15378"/>
        <dbReference type="ChEBI" id="CHEBI:29999"/>
        <dbReference type="ChEBI" id="CHEBI:30616"/>
        <dbReference type="ChEBI" id="CHEBI:83421"/>
        <dbReference type="ChEBI" id="CHEBI:456216"/>
        <dbReference type="EC" id="2.7.11.2"/>
    </reaction>
</comment>
<comment type="subunit">
    <text evidence="9">Interacts with PKP2.</text>
</comment>
<comment type="interaction">
    <interactant intactId="EBI-2610722">
        <id>P40530</id>
    </interactant>
    <interactant intactId="EBI-23792">
        <id>P53170</id>
        <label>PKP2</label>
    </interactant>
    <organismsDiffer>false</organismsDiffer>
    <experiments>4</experiments>
</comment>
<comment type="subcellular location">
    <subcellularLocation>
        <location evidence="4 7 8 9">Mitochondrion matrix</location>
    </subcellularLocation>
</comment>
<comment type="miscellaneous">
    <text evidence="5">Present with 4220 molecules/cell in log phase SD medium.</text>
</comment>
<comment type="similarity">
    <text evidence="12">Belongs to the PDK/BCKDK protein kinase family.</text>
</comment>
<name>PDK1_YEAST</name>
<gene>
    <name evidence="10" type="primary">PKP1</name>
    <name type="ordered locus">YIL042C</name>
</gene>
<proteinExistence type="evidence at protein level"/>
<keyword id="KW-0067">ATP-binding</keyword>
<keyword id="KW-0418">Kinase</keyword>
<keyword id="KW-0496">Mitochondrion</keyword>
<keyword id="KW-0547">Nucleotide-binding</keyword>
<keyword id="KW-0597">Phosphoprotein</keyword>
<keyword id="KW-1185">Reference proteome</keyword>
<keyword id="KW-0808">Transferase</keyword>
<keyword id="KW-0809">Transit peptide</keyword>
<sequence>MWKIMRSWKCGGMRWAHRQRPSHELLSQLSFDQHYKIRSNIELLIQDYASKPIAPLNYEYFLQYRPPLTKKEEYMLTIKTINLLLSLTCKRLNAIQRLPYNAVINPHIERTNSLYLKSLQTLLSIAYPYELHNPPKIQAKFTELLDDHEDAIVVLAKGLQEIQSCYPKFQISQFLNFHLKERITMKLLVTHYLSLMAQNKGDTNKRMIGILHRDLPIAQLIKHVSDYVNDICFVKFNTQRTPVLIHPPSQDITFTCIPPILEYIMTEVFKNAFEAQIALGKEHMPIEINLLKPDDDELYLRIRDHGGGITPEVEALMFNYSYSTHTQQSADSESTDLPGEQINNVSGMGFGLPMCKTYLELFGGKIDVQSLLGWGTDVYIKLKGPSKTALLSKK</sequence>
<reference key="1">
    <citation type="journal article" date="1997" name="Nature">
        <title>The nucleotide sequence of Saccharomyces cerevisiae chromosome IX.</title>
        <authorList>
            <person name="Churcher C.M."/>
            <person name="Bowman S."/>
            <person name="Badcock K."/>
            <person name="Bankier A.T."/>
            <person name="Brown D."/>
            <person name="Chillingworth T."/>
            <person name="Connor R."/>
            <person name="Devlin K."/>
            <person name="Gentles S."/>
            <person name="Hamlin N."/>
            <person name="Harris D.E."/>
            <person name="Horsnell T."/>
            <person name="Hunt S."/>
            <person name="Jagels K."/>
            <person name="Jones M."/>
            <person name="Lye G."/>
            <person name="Moule S."/>
            <person name="Odell C."/>
            <person name="Pearson D."/>
            <person name="Rajandream M.A."/>
            <person name="Rice P."/>
            <person name="Rowley N."/>
            <person name="Skelton J."/>
            <person name="Smith V."/>
            <person name="Walsh S.V."/>
            <person name="Whitehead S."/>
            <person name="Barrell B.G."/>
        </authorList>
    </citation>
    <scope>NUCLEOTIDE SEQUENCE [LARGE SCALE GENOMIC DNA]</scope>
    <source>
        <strain>ATCC 204508 / S288c</strain>
    </source>
</reference>
<reference key="2">
    <citation type="journal article" date="2014" name="G3 (Bethesda)">
        <title>The reference genome sequence of Saccharomyces cerevisiae: Then and now.</title>
        <authorList>
            <person name="Engel S.R."/>
            <person name="Dietrich F.S."/>
            <person name="Fisk D.G."/>
            <person name="Binkley G."/>
            <person name="Balakrishnan R."/>
            <person name="Costanzo M.C."/>
            <person name="Dwight S.S."/>
            <person name="Hitz B.C."/>
            <person name="Karra K."/>
            <person name="Nash R.S."/>
            <person name="Weng S."/>
            <person name="Wong E.D."/>
            <person name="Lloyd P."/>
            <person name="Skrzypek M.S."/>
            <person name="Miyasato S.R."/>
            <person name="Simison M."/>
            <person name="Cherry J.M."/>
        </authorList>
    </citation>
    <scope>GENOME REANNOTATION</scope>
    <source>
        <strain>ATCC 204508 / S288c</strain>
    </source>
</reference>
<reference key="3">
    <citation type="journal article" date="2007" name="Genome Res.">
        <title>Approaching a complete repository of sequence-verified protein-encoding clones for Saccharomyces cerevisiae.</title>
        <authorList>
            <person name="Hu Y."/>
            <person name="Rolfs A."/>
            <person name="Bhullar B."/>
            <person name="Murthy T.V.S."/>
            <person name="Zhu C."/>
            <person name="Berger M.F."/>
            <person name="Camargo A.A."/>
            <person name="Kelley F."/>
            <person name="McCarron S."/>
            <person name="Jepson D."/>
            <person name="Richardson A."/>
            <person name="Raphael J."/>
            <person name="Moreira D."/>
            <person name="Taycher E."/>
            <person name="Zuo D."/>
            <person name="Mohr S."/>
            <person name="Kane M.F."/>
            <person name="Williamson J."/>
            <person name="Simpson A.J.G."/>
            <person name="Bulyk M.L."/>
            <person name="Harlow E."/>
            <person name="Marsischky G."/>
            <person name="Kolodner R.D."/>
            <person name="LaBaer J."/>
        </authorList>
    </citation>
    <scope>NUCLEOTIDE SEQUENCE [GENOMIC DNA]</scope>
    <source>
        <strain>ATCC 204508 / S288c</strain>
    </source>
</reference>
<reference key="4">
    <citation type="journal article" date="2003" name="Nature">
        <title>Global analysis of protein localization in budding yeast.</title>
        <authorList>
            <person name="Huh W.-K."/>
            <person name="Falvo J.V."/>
            <person name="Gerke L.C."/>
            <person name="Carroll A.S."/>
            <person name="Howson R.W."/>
            <person name="Weissman J.S."/>
            <person name="O'Shea E.K."/>
        </authorList>
    </citation>
    <scope>SUBCELLULAR LOCATION [LARGE SCALE ANALYSIS]</scope>
</reference>
<reference key="5">
    <citation type="journal article" date="2003" name="Nature">
        <title>Global analysis of protein expression in yeast.</title>
        <authorList>
            <person name="Ghaemmaghami S."/>
            <person name="Huh W.-K."/>
            <person name="Bower K."/>
            <person name="Howson R.W."/>
            <person name="Belle A."/>
            <person name="Dephoure N."/>
            <person name="O'Shea E.K."/>
            <person name="Weissman J.S."/>
        </authorList>
    </citation>
    <scope>LEVEL OF PROTEIN EXPRESSION [LARGE SCALE ANALYSIS]</scope>
</reference>
<reference key="6">
    <citation type="journal article" date="2004" name="Proc. Natl. Acad. Sci. U.S.A.">
        <title>A genome-wide screen for Saccharomyces cerevisiae deletion mutants that affect telomere length.</title>
        <authorList>
            <person name="Askree S.H."/>
            <person name="Yehuda T."/>
            <person name="Smolikov S."/>
            <person name="Gurevich R."/>
            <person name="Hawk J."/>
            <person name="Coker C."/>
            <person name="Krauskopf A."/>
            <person name="Kupiec M."/>
            <person name="McEachern M.J."/>
        </authorList>
    </citation>
    <scope>FUNCTION</scope>
</reference>
<reference key="7">
    <citation type="journal article" date="2006" name="FEBS Lett.">
        <title>YIL042c and YOR090c encode the kinase and phosphatase of the Saccharomyces cerevisiae pyruvate dehydrogenase complex.</title>
        <authorList>
            <person name="Krause-Buchholz U."/>
            <person name="Gey U."/>
            <person name="Wunschmann J."/>
            <person name="Becker S."/>
            <person name="Rodel G."/>
        </authorList>
    </citation>
    <scope>FUNCTION</scope>
    <scope>CATALYTIC ACTIVITY</scope>
    <scope>SUBCELLULAR LOCATION</scope>
</reference>
<reference key="8">
    <citation type="journal article" date="2006" name="J. Proteome Res.">
        <title>Toward the complete yeast mitochondrial proteome: multidimensional separation techniques for mitochondrial proteomics.</title>
        <authorList>
            <person name="Reinders J."/>
            <person name="Zahedi R.P."/>
            <person name="Pfanner N."/>
            <person name="Meisinger C."/>
            <person name="Sickmann A."/>
        </authorList>
    </citation>
    <scope>SUBCELLULAR LOCATION [LARGE SCALE ANALYSIS]</scope>
    <scope>IDENTIFICATION BY MASS SPECTROMETRY</scope>
</reference>
<reference key="9">
    <citation type="journal article" date="2008" name="J. Biol. Chem.">
        <title>Yeast pyruvate dehydrogenase complex is regulated by a concerted activity of two kinases and two phosphatases.</title>
        <authorList>
            <person name="Gey U."/>
            <person name="Czupalla C."/>
            <person name="Hoflack B."/>
            <person name="Rodel G."/>
            <person name="Krause-Buchholz U."/>
        </authorList>
    </citation>
    <scope>SUBCELLULAR LOCATION</scope>
    <scope>FUNCTION</scope>
    <scope>INTERACTION WITH PKP2</scope>
</reference>
<dbReference type="EC" id="2.7.11.2" evidence="13 14"/>
<dbReference type="EMBL" id="Z46861">
    <property type="protein sequence ID" value="CAA86909.1"/>
    <property type="molecule type" value="Genomic_DNA"/>
</dbReference>
<dbReference type="EMBL" id="AY692706">
    <property type="protein sequence ID" value="AAT92725.1"/>
    <property type="molecule type" value="Genomic_DNA"/>
</dbReference>
<dbReference type="EMBL" id="BK006942">
    <property type="protein sequence ID" value="DAA08506.1"/>
    <property type="molecule type" value="Genomic_DNA"/>
</dbReference>
<dbReference type="PIR" id="S50696">
    <property type="entry name" value="S50696"/>
</dbReference>
<dbReference type="RefSeq" id="NP_012222.1">
    <property type="nucleotide sequence ID" value="NM_001179392.1"/>
</dbReference>
<dbReference type="SMR" id="P40530"/>
<dbReference type="BioGRID" id="34948">
    <property type="interactions" value="87"/>
</dbReference>
<dbReference type="DIP" id="DIP-2547N"/>
<dbReference type="FunCoup" id="P40530">
    <property type="interactions" value="417"/>
</dbReference>
<dbReference type="IntAct" id="P40530">
    <property type="interactions" value="5"/>
</dbReference>
<dbReference type="MINT" id="P40530"/>
<dbReference type="STRING" id="4932.YIL042C"/>
<dbReference type="iPTMnet" id="P40530"/>
<dbReference type="PaxDb" id="4932-YIL042C"/>
<dbReference type="PeptideAtlas" id="P40530"/>
<dbReference type="EnsemblFungi" id="YIL042C_mRNA">
    <property type="protein sequence ID" value="YIL042C"/>
    <property type="gene ID" value="YIL042C"/>
</dbReference>
<dbReference type="GeneID" id="854769"/>
<dbReference type="KEGG" id="sce:YIL042C"/>
<dbReference type="AGR" id="SGD:S000001304"/>
<dbReference type="SGD" id="S000001304">
    <property type="gene designation" value="PKP1"/>
</dbReference>
<dbReference type="VEuPathDB" id="FungiDB:YIL042C"/>
<dbReference type="eggNOG" id="KOG0787">
    <property type="taxonomic scope" value="Eukaryota"/>
</dbReference>
<dbReference type="GeneTree" id="ENSGT01030000234646"/>
<dbReference type="HOGENOM" id="CLU_023861_4_1_1"/>
<dbReference type="InParanoid" id="P40530"/>
<dbReference type="OMA" id="WSYPPSA"/>
<dbReference type="OrthoDB" id="3264224at2759"/>
<dbReference type="BioCyc" id="YEAST:G3O-31314-MONOMER"/>
<dbReference type="BioGRID-ORCS" id="854769">
    <property type="hits" value="4 hits in 13 CRISPR screens"/>
</dbReference>
<dbReference type="PRO" id="PR:P40530"/>
<dbReference type="Proteomes" id="UP000002311">
    <property type="component" value="Chromosome IX"/>
</dbReference>
<dbReference type="RNAct" id="P40530">
    <property type="molecule type" value="protein"/>
</dbReference>
<dbReference type="GO" id="GO:0005759">
    <property type="term" value="C:mitochondrial matrix"/>
    <property type="evidence" value="ECO:0007669"/>
    <property type="project" value="UniProtKB-SubCell"/>
</dbReference>
<dbReference type="GO" id="GO:0005739">
    <property type="term" value="C:mitochondrion"/>
    <property type="evidence" value="ECO:0000314"/>
    <property type="project" value="SGD"/>
</dbReference>
<dbReference type="GO" id="GO:0005524">
    <property type="term" value="F:ATP binding"/>
    <property type="evidence" value="ECO:0007669"/>
    <property type="project" value="UniProtKB-KW"/>
</dbReference>
<dbReference type="GO" id="GO:0004672">
    <property type="term" value="F:protein kinase activity"/>
    <property type="evidence" value="ECO:0000314"/>
    <property type="project" value="SGD"/>
</dbReference>
<dbReference type="GO" id="GO:0004740">
    <property type="term" value="F:pyruvate dehydrogenase (acetyl-transferring) kinase activity"/>
    <property type="evidence" value="ECO:0000315"/>
    <property type="project" value="SGD"/>
</dbReference>
<dbReference type="GO" id="GO:0065003">
    <property type="term" value="P:protein-containing complex assembly"/>
    <property type="evidence" value="ECO:0000315"/>
    <property type="project" value="SGD"/>
</dbReference>
<dbReference type="GO" id="GO:0010510">
    <property type="term" value="P:regulation of acetyl-CoA biosynthetic process from pyruvate"/>
    <property type="evidence" value="ECO:0000318"/>
    <property type="project" value="GO_Central"/>
</dbReference>
<dbReference type="GO" id="GO:0010906">
    <property type="term" value="P:regulation of glucose metabolic process"/>
    <property type="evidence" value="ECO:0000318"/>
    <property type="project" value="GO_Central"/>
</dbReference>
<dbReference type="GO" id="GO:1901524">
    <property type="term" value="P:regulation of mitophagy"/>
    <property type="evidence" value="ECO:0000315"/>
    <property type="project" value="SGD"/>
</dbReference>
<dbReference type="CDD" id="cd16929">
    <property type="entry name" value="HATPase_PDK-like"/>
    <property type="match status" value="1"/>
</dbReference>
<dbReference type="FunFam" id="1.20.140.20:FF:000005">
    <property type="entry name" value="Pkp1p"/>
    <property type="match status" value="1"/>
</dbReference>
<dbReference type="FunFam" id="3.30.565.10:FF:000142">
    <property type="entry name" value="Pkp1p"/>
    <property type="match status" value="1"/>
</dbReference>
<dbReference type="Gene3D" id="1.20.140.20">
    <property type="entry name" value="Alpha-ketoacid/pyruvate dehydrogenase kinase, N-terminal domain"/>
    <property type="match status" value="1"/>
</dbReference>
<dbReference type="Gene3D" id="3.30.565.10">
    <property type="entry name" value="Histidine kinase-like ATPase, C-terminal domain"/>
    <property type="match status" value="1"/>
</dbReference>
<dbReference type="InterPro" id="IPR036784">
    <property type="entry name" value="AK/P_DHK_N_sf"/>
</dbReference>
<dbReference type="InterPro" id="IPR018955">
    <property type="entry name" value="BCDHK/PDK_N"/>
</dbReference>
<dbReference type="InterPro" id="IPR039028">
    <property type="entry name" value="BCKD/PDK"/>
</dbReference>
<dbReference type="InterPro" id="IPR036890">
    <property type="entry name" value="HATPase_C_sf"/>
</dbReference>
<dbReference type="InterPro" id="IPR005467">
    <property type="entry name" value="His_kinase_dom"/>
</dbReference>
<dbReference type="InterPro" id="IPR004358">
    <property type="entry name" value="Sig_transdc_His_kin-like_C"/>
</dbReference>
<dbReference type="PANTHER" id="PTHR11947:SF20">
    <property type="entry name" value="[3-METHYL-2-OXOBUTANOATE DEHYDROGENASE [LIPOAMIDE]] KINASE, MITOCHONDRIAL"/>
    <property type="match status" value="1"/>
</dbReference>
<dbReference type="PANTHER" id="PTHR11947">
    <property type="entry name" value="PYRUVATE DEHYDROGENASE KINASE"/>
    <property type="match status" value="1"/>
</dbReference>
<dbReference type="Pfam" id="PF10436">
    <property type="entry name" value="BCDHK_Adom3"/>
    <property type="match status" value="1"/>
</dbReference>
<dbReference type="Pfam" id="PF02518">
    <property type="entry name" value="HATPase_c"/>
    <property type="match status" value="1"/>
</dbReference>
<dbReference type="PRINTS" id="PR00344">
    <property type="entry name" value="BCTRLSENSOR"/>
</dbReference>
<dbReference type="SMART" id="SM00387">
    <property type="entry name" value="HATPase_c"/>
    <property type="match status" value="1"/>
</dbReference>
<dbReference type="SUPFAM" id="SSF69012">
    <property type="entry name" value="alpha-ketoacid dehydrogenase kinase, N-terminal domain"/>
    <property type="match status" value="1"/>
</dbReference>
<dbReference type="SUPFAM" id="SSF55874">
    <property type="entry name" value="ATPase domain of HSP90 chaperone/DNA topoisomerase II/histidine kinase"/>
    <property type="match status" value="1"/>
</dbReference>
<dbReference type="PROSITE" id="PS50109">
    <property type="entry name" value="HIS_KIN"/>
    <property type="match status" value="1"/>
</dbReference>
<protein>
    <recommendedName>
        <fullName evidence="10">[Pyruvate dehydrogenase (acetyl-transferring)] kinase 1, mitochondrial</fullName>
        <shortName evidence="10">PDK 1</shortName>
        <shortName evidence="10">Pyruvate dehydrogenase kinase 1</shortName>
        <ecNumber evidence="13 14">2.7.11.2</ecNumber>
    </recommendedName>
    <alternativeName>
        <fullName evidence="11">Protein kinase of PDH protein 1</fullName>
    </alternativeName>
    <alternativeName>
        <fullName evidence="11">Pyruvate dehydrogenase complex kinase 1</fullName>
        <shortName evidence="11">PDC kinase 1</shortName>
    </alternativeName>
    <alternativeName>
        <fullName evidence="12">[Pyruvate dehydrogenase [lipoamide]] kinase 1</fullName>
    </alternativeName>
</protein>
<feature type="transit peptide" description="Mitochondrion" evidence="2">
    <location>
        <begin position="1"/>
        <end position="20"/>
    </location>
</feature>
<feature type="chain" id="PRO_0000213686" description="[Pyruvate dehydrogenase (acetyl-transferring)] kinase 1, mitochondrial">
    <location>
        <begin position="21"/>
        <end position="394"/>
    </location>
</feature>
<feature type="domain" description="Histidine kinase" evidence="3">
    <location>
        <begin position="126"/>
        <end position="386"/>
    </location>
</feature>
<feature type="binding site" evidence="1">
    <location>
        <begin position="267"/>
        <end position="274"/>
    </location>
    <ligand>
        <name>ATP</name>
        <dbReference type="ChEBI" id="CHEBI:30616"/>
    </ligand>
</feature>
<feature type="binding site" evidence="1">
    <location>
        <position position="304"/>
    </location>
    <ligand>
        <name>ATP</name>
        <dbReference type="ChEBI" id="CHEBI:30616"/>
    </ligand>
</feature>
<feature type="binding site" evidence="1">
    <location>
        <begin position="323"/>
        <end position="324"/>
    </location>
    <ligand>
        <name>ATP</name>
        <dbReference type="ChEBI" id="CHEBI:30616"/>
    </ligand>
</feature>
<feature type="binding site" evidence="1">
    <location>
        <begin position="347"/>
        <end position="352"/>
    </location>
    <ligand>
        <name>ATP</name>
        <dbReference type="ChEBI" id="CHEBI:30616"/>
    </ligand>
</feature>
<feature type="modified residue" description="Phosphohistidine; by autocatalysis" evidence="3">
    <location>
        <position position="148"/>
    </location>
</feature>